<keyword id="KW-1185">Reference proteome</keyword>
<keyword id="KW-0687">Ribonucleoprotein</keyword>
<keyword id="KW-0689">Ribosomal protein</keyword>
<accession>P66340</accession>
<accession>Q97SV6</accession>
<name>RS10_STRR6</name>
<evidence type="ECO:0000255" key="1">
    <source>
        <dbReference type="HAMAP-Rule" id="MF_00508"/>
    </source>
</evidence>
<evidence type="ECO:0000305" key="2"/>
<protein>
    <recommendedName>
        <fullName evidence="1">Small ribosomal subunit protein uS10</fullName>
    </recommendedName>
    <alternativeName>
        <fullName evidence="2">30S ribosomal protein S10</fullName>
    </alternativeName>
</protein>
<reference key="1">
    <citation type="journal article" date="2001" name="J. Bacteriol.">
        <title>Genome of the bacterium Streptococcus pneumoniae strain R6.</title>
        <authorList>
            <person name="Hoskins J."/>
            <person name="Alborn W.E. Jr."/>
            <person name="Arnold J."/>
            <person name="Blaszczak L.C."/>
            <person name="Burgett S."/>
            <person name="DeHoff B.S."/>
            <person name="Estrem S.T."/>
            <person name="Fritz L."/>
            <person name="Fu D.-J."/>
            <person name="Fuller W."/>
            <person name="Geringer C."/>
            <person name="Gilmour R."/>
            <person name="Glass J.S."/>
            <person name="Khoja H."/>
            <person name="Kraft A.R."/>
            <person name="Lagace R.E."/>
            <person name="LeBlanc D.J."/>
            <person name="Lee L.N."/>
            <person name="Lefkowitz E.J."/>
            <person name="Lu J."/>
            <person name="Matsushima P."/>
            <person name="McAhren S.M."/>
            <person name="McHenney M."/>
            <person name="McLeaster K."/>
            <person name="Mundy C.W."/>
            <person name="Nicas T.I."/>
            <person name="Norris F.H."/>
            <person name="O'Gara M."/>
            <person name="Peery R.B."/>
            <person name="Robertson G.T."/>
            <person name="Rockey P."/>
            <person name="Sun P.-M."/>
            <person name="Winkler M.E."/>
            <person name="Yang Y."/>
            <person name="Young-Bellido M."/>
            <person name="Zhao G."/>
            <person name="Zook C.A."/>
            <person name="Baltz R.H."/>
            <person name="Jaskunas S.R."/>
            <person name="Rosteck P.R. Jr."/>
            <person name="Skatrud P.L."/>
            <person name="Glass J.I."/>
        </authorList>
    </citation>
    <scope>NUCLEOTIDE SEQUENCE [LARGE SCALE GENOMIC DNA]</scope>
    <source>
        <strain>ATCC BAA-255 / R6</strain>
    </source>
</reference>
<proteinExistence type="inferred from homology"/>
<dbReference type="EMBL" id="AE007317">
    <property type="protein sequence ID" value="AAK98991.1"/>
    <property type="molecule type" value="Genomic_DNA"/>
</dbReference>
<dbReference type="PIR" id="C97895">
    <property type="entry name" value="C97895"/>
</dbReference>
<dbReference type="RefSeq" id="NP_357781.1">
    <property type="nucleotide sequence ID" value="NC_003098.1"/>
</dbReference>
<dbReference type="RefSeq" id="WP_001284513.1">
    <property type="nucleotide sequence ID" value="NC_003098.1"/>
</dbReference>
<dbReference type="SMR" id="P66340"/>
<dbReference type="STRING" id="171101.spr0187"/>
<dbReference type="GeneID" id="93738956"/>
<dbReference type="KEGG" id="spr:spr0187"/>
<dbReference type="PATRIC" id="fig|171101.6.peg.219"/>
<dbReference type="eggNOG" id="COG0051">
    <property type="taxonomic scope" value="Bacteria"/>
</dbReference>
<dbReference type="HOGENOM" id="CLU_122625_1_3_9"/>
<dbReference type="PRO" id="PR:P66340"/>
<dbReference type="Proteomes" id="UP000000586">
    <property type="component" value="Chromosome"/>
</dbReference>
<dbReference type="GO" id="GO:0015935">
    <property type="term" value="C:small ribosomal subunit"/>
    <property type="evidence" value="ECO:0000318"/>
    <property type="project" value="GO_Central"/>
</dbReference>
<dbReference type="GO" id="GO:0003735">
    <property type="term" value="F:structural constituent of ribosome"/>
    <property type="evidence" value="ECO:0000318"/>
    <property type="project" value="GO_Central"/>
</dbReference>
<dbReference type="GO" id="GO:0000049">
    <property type="term" value="F:tRNA binding"/>
    <property type="evidence" value="ECO:0007669"/>
    <property type="project" value="UniProtKB-UniRule"/>
</dbReference>
<dbReference type="GO" id="GO:0006412">
    <property type="term" value="P:translation"/>
    <property type="evidence" value="ECO:0007669"/>
    <property type="project" value="UniProtKB-UniRule"/>
</dbReference>
<dbReference type="FunFam" id="3.30.70.600:FF:000001">
    <property type="entry name" value="30S ribosomal protein S10"/>
    <property type="match status" value="1"/>
</dbReference>
<dbReference type="Gene3D" id="3.30.70.600">
    <property type="entry name" value="Ribosomal protein S10 domain"/>
    <property type="match status" value="1"/>
</dbReference>
<dbReference type="HAMAP" id="MF_00508">
    <property type="entry name" value="Ribosomal_uS10"/>
    <property type="match status" value="1"/>
</dbReference>
<dbReference type="InterPro" id="IPR001848">
    <property type="entry name" value="Ribosomal_uS10"/>
</dbReference>
<dbReference type="InterPro" id="IPR018268">
    <property type="entry name" value="Ribosomal_uS10_CS"/>
</dbReference>
<dbReference type="InterPro" id="IPR027486">
    <property type="entry name" value="Ribosomal_uS10_dom"/>
</dbReference>
<dbReference type="InterPro" id="IPR036838">
    <property type="entry name" value="Ribosomal_uS10_dom_sf"/>
</dbReference>
<dbReference type="NCBIfam" id="NF001861">
    <property type="entry name" value="PRK00596.1"/>
    <property type="match status" value="1"/>
</dbReference>
<dbReference type="NCBIfam" id="TIGR01049">
    <property type="entry name" value="rpsJ_bact"/>
    <property type="match status" value="1"/>
</dbReference>
<dbReference type="PANTHER" id="PTHR11700">
    <property type="entry name" value="30S RIBOSOMAL PROTEIN S10 FAMILY MEMBER"/>
    <property type="match status" value="1"/>
</dbReference>
<dbReference type="Pfam" id="PF00338">
    <property type="entry name" value="Ribosomal_S10"/>
    <property type="match status" value="1"/>
</dbReference>
<dbReference type="PRINTS" id="PR00971">
    <property type="entry name" value="RIBOSOMALS10"/>
</dbReference>
<dbReference type="SMART" id="SM01403">
    <property type="entry name" value="Ribosomal_S10"/>
    <property type="match status" value="1"/>
</dbReference>
<dbReference type="SUPFAM" id="SSF54999">
    <property type="entry name" value="Ribosomal protein S10"/>
    <property type="match status" value="1"/>
</dbReference>
<dbReference type="PROSITE" id="PS00361">
    <property type="entry name" value="RIBOSOMAL_S10"/>
    <property type="match status" value="1"/>
</dbReference>
<sequence length="102" mass="11583">MANKKIRIRLKAYEHRTLDTAAAKIVESATRTGAQVAGPIPLPTERSLYTIIRATHKYKDSREQFEMRTHKRLIDIVNPTQKTVDALMKLDLPSGVNVEIKL</sequence>
<comment type="function">
    <text evidence="1">Involved in the binding of tRNA to the ribosomes.</text>
</comment>
<comment type="subunit">
    <text evidence="1">Part of the 30S ribosomal subunit.</text>
</comment>
<comment type="similarity">
    <text evidence="1">Belongs to the universal ribosomal protein uS10 family.</text>
</comment>
<organism>
    <name type="scientific">Streptococcus pneumoniae (strain ATCC BAA-255 / R6)</name>
    <dbReference type="NCBI Taxonomy" id="171101"/>
    <lineage>
        <taxon>Bacteria</taxon>
        <taxon>Bacillati</taxon>
        <taxon>Bacillota</taxon>
        <taxon>Bacilli</taxon>
        <taxon>Lactobacillales</taxon>
        <taxon>Streptococcaceae</taxon>
        <taxon>Streptococcus</taxon>
    </lineage>
</organism>
<gene>
    <name evidence="1" type="primary">rpsJ</name>
    <name type="ordered locus">spr0187</name>
</gene>
<feature type="chain" id="PRO_0000146608" description="Small ribosomal subunit protein uS10">
    <location>
        <begin position="1"/>
        <end position="102"/>
    </location>
</feature>